<sequence length="171" mass="18445">MSHNLEGKKAIVAEVSSQVAKAQAIVIAEYRGLGVDQFTRLRVKARESGIYFRVIKNTFARRAVADTPFSGLAESMVGPLAYGIGSDPVATAKILHEFAKDNDRFVIKAGAMAGIVMSDKDVAALAVLPSREELLSKLLGTMQAPIAKFVRTLNEVPSKFVRGLAAVRDKK</sequence>
<comment type="function">
    <text evidence="1">Forms part of the ribosomal stalk, playing a central role in the interaction of the ribosome with GTP-bound translation factors.</text>
</comment>
<comment type="subunit">
    <text evidence="1">Part of the ribosomal stalk of the 50S ribosomal subunit. The N-terminus interacts with L11 and the large rRNA to form the base of the stalk. The C-terminus forms an elongated spine to which L12 dimers bind in a sequential fashion forming a multimeric L10(L12)X complex.</text>
</comment>
<comment type="similarity">
    <text evidence="1">Belongs to the universal ribosomal protein uL10 family.</text>
</comment>
<protein>
    <recommendedName>
        <fullName evidence="1">Large ribosomal subunit protein uL10</fullName>
    </recommendedName>
    <alternativeName>
        <fullName evidence="2">50S ribosomal protein L10</fullName>
    </alternativeName>
</protein>
<proteinExistence type="inferred from homology"/>
<name>RL10_NITEU</name>
<evidence type="ECO:0000255" key="1">
    <source>
        <dbReference type="HAMAP-Rule" id="MF_00362"/>
    </source>
</evidence>
<evidence type="ECO:0000305" key="2"/>
<gene>
    <name evidence="1" type="primary">rplJ</name>
    <name type="ordered locus">NE2048</name>
</gene>
<dbReference type="EMBL" id="AL954747">
    <property type="protein sequence ID" value="CAD85959.1"/>
    <property type="molecule type" value="Genomic_DNA"/>
</dbReference>
<dbReference type="RefSeq" id="WP_011112561.1">
    <property type="nucleotide sequence ID" value="NC_004757.1"/>
</dbReference>
<dbReference type="SMR" id="Q82T73"/>
<dbReference type="STRING" id="228410.NE2048"/>
<dbReference type="GeneID" id="87105185"/>
<dbReference type="KEGG" id="neu:NE2048"/>
<dbReference type="eggNOG" id="COG0244">
    <property type="taxonomic scope" value="Bacteria"/>
</dbReference>
<dbReference type="HOGENOM" id="CLU_092227_0_1_4"/>
<dbReference type="OrthoDB" id="9808307at2"/>
<dbReference type="PhylomeDB" id="Q82T73"/>
<dbReference type="Proteomes" id="UP000001416">
    <property type="component" value="Chromosome"/>
</dbReference>
<dbReference type="GO" id="GO:1990904">
    <property type="term" value="C:ribonucleoprotein complex"/>
    <property type="evidence" value="ECO:0007669"/>
    <property type="project" value="UniProtKB-KW"/>
</dbReference>
<dbReference type="GO" id="GO:0005840">
    <property type="term" value="C:ribosome"/>
    <property type="evidence" value="ECO:0007669"/>
    <property type="project" value="UniProtKB-KW"/>
</dbReference>
<dbReference type="GO" id="GO:0070180">
    <property type="term" value="F:large ribosomal subunit rRNA binding"/>
    <property type="evidence" value="ECO:0007669"/>
    <property type="project" value="UniProtKB-UniRule"/>
</dbReference>
<dbReference type="GO" id="GO:0006412">
    <property type="term" value="P:translation"/>
    <property type="evidence" value="ECO:0007669"/>
    <property type="project" value="UniProtKB-UniRule"/>
</dbReference>
<dbReference type="CDD" id="cd05797">
    <property type="entry name" value="Ribosomal_L10"/>
    <property type="match status" value="1"/>
</dbReference>
<dbReference type="Gene3D" id="3.30.70.1730">
    <property type="match status" value="1"/>
</dbReference>
<dbReference type="Gene3D" id="6.10.250.290">
    <property type="match status" value="1"/>
</dbReference>
<dbReference type="HAMAP" id="MF_00362">
    <property type="entry name" value="Ribosomal_uL10"/>
    <property type="match status" value="1"/>
</dbReference>
<dbReference type="InterPro" id="IPR001790">
    <property type="entry name" value="Ribosomal_uL10"/>
</dbReference>
<dbReference type="InterPro" id="IPR043141">
    <property type="entry name" value="Ribosomal_uL10-like_sf"/>
</dbReference>
<dbReference type="InterPro" id="IPR022973">
    <property type="entry name" value="Ribosomal_uL10_bac"/>
</dbReference>
<dbReference type="InterPro" id="IPR047865">
    <property type="entry name" value="Ribosomal_uL10_bac_type"/>
</dbReference>
<dbReference type="NCBIfam" id="NF000955">
    <property type="entry name" value="PRK00099.1-1"/>
    <property type="match status" value="1"/>
</dbReference>
<dbReference type="PANTHER" id="PTHR11560">
    <property type="entry name" value="39S RIBOSOMAL PROTEIN L10, MITOCHONDRIAL"/>
    <property type="match status" value="1"/>
</dbReference>
<dbReference type="Pfam" id="PF00466">
    <property type="entry name" value="Ribosomal_L10"/>
    <property type="match status" value="1"/>
</dbReference>
<dbReference type="SUPFAM" id="SSF160369">
    <property type="entry name" value="Ribosomal protein L10-like"/>
    <property type="match status" value="1"/>
</dbReference>
<keyword id="KW-1185">Reference proteome</keyword>
<keyword id="KW-0687">Ribonucleoprotein</keyword>
<keyword id="KW-0689">Ribosomal protein</keyword>
<keyword id="KW-0694">RNA-binding</keyword>
<keyword id="KW-0699">rRNA-binding</keyword>
<accession>Q82T73</accession>
<feature type="chain" id="PRO_0000154677" description="Large ribosomal subunit protein uL10">
    <location>
        <begin position="1"/>
        <end position="171"/>
    </location>
</feature>
<reference key="1">
    <citation type="journal article" date="2003" name="J. Bacteriol.">
        <title>Complete genome sequence of the ammonia-oxidizing bacterium and obligate chemolithoautotroph Nitrosomonas europaea.</title>
        <authorList>
            <person name="Chain P."/>
            <person name="Lamerdin J.E."/>
            <person name="Larimer F.W."/>
            <person name="Regala W."/>
            <person name="Lao V."/>
            <person name="Land M.L."/>
            <person name="Hauser L."/>
            <person name="Hooper A.B."/>
            <person name="Klotz M.G."/>
            <person name="Norton J."/>
            <person name="Sayavedra-Soto L.A."/>
            <person name="Arciero D.M."/>
            <person name="Hommes N.G."/>
            <person name="Whittaker M.M."/>
            <person name="Arp D.J."/>
        </authorList>
    </citation>
    <scope>NUCLEOTIDE SEQUENCE [LARGE SCALE GENOMIC DNA]</scope>
    <source>
        <strain>ATCC 19718 / CIP 103999 / KCTC 2705 / NBRC 14298</strain>
    </source>
</reference>
<organism>
    <name type="scientific">Nitrosomonas europaea (strain ATCC 19718 / CIP 103999 / KCTC 2705 / NBRC 14298)</name>
    <dbReference type="NCBI Taxonomy" id="228410"/>
    <lineage>
        <taxon>Bacteria</taxon>
        <taxon>Pseudomonadati</taxon>
        <taxon>Pseudomonadota</taxon>
        <taxon>Betaproteobacteria</taxon>
        <taxon>Nitrosomonadales</taxon>
        <taxon>Nitrosomonadaceae</taxon>
        <taxon>Nitrosomonas</taxon>
    </lineage>
</organism>